<evidence type="ECO:0000250" key="1"/>
<evidence type="ECO:0000255" key="2">
    <source>
        <dbReference type="PROSITE-ProRule" id="PRU10009"/>
    </source>
</evidence>
<evidence type="ECO:0000305" key="3"/>
<feature type="chain" id="PRO_0000145569" description="Glyceraldehyde-3-phosphate dehydrogenase">
    <location>
        <begin position="1"/>
        <end position="332"/>
    </location>
</feature>
<feature type="active site" description="Nucleophile" evidence="2">
    <location>
        <position position="149"/>
    </location>
</feature>
<feature type="binding site" evidence="1">
    <location>
        <begin position="10"/>
        <end position="11"/>
    </location>
    <ligand>
        <name>NAD(+)</name>
        <dbReference type="ChEBI" id="CHEBI:57540"/>
    </ligand>
</feature>
<feature type="binding site" evidence="1">
    <location>
        <position position="32"/>
    </location>
    <ligand>
        <name>NAD(+)</name>
        <dbReference type="ChEBI" id="CHEBI:57540"/>
    </ligand>
</feature>
<feature type="binding site" evidence="1">
    <location>
        <position position="77"/>
    </location>
    <ligand>
        <name>NAD(+)</name>
        <dbReference type="ChEBI" id="CHEBI:57540"/>
    </ligand>
</feature>
<feature type="binding site" evidence="1">
    <location>
        <begin position="148"/>
        <end position="150"/>
    </location>
    <ligand>
        <name>D-glyceraldehyde 3-phosphate</name>
        <dbReference type="ChEBI" id="CHEBI:59776"/>
    </ligand>
</feature>
<feature type="binding site" evidence="1">
    <location>
        <position position="179"/>
    </location>
    <ligand>
        <name>D-glyceraldehyde 3-phosphate</name>
        <dbReference type="ChEBI" id="CHEBI:59776"/>
    </ligand>
</feature>
<feature type="binding site" evidence="1">
    <location>
        <begin position="208"/>
        <end position="209"/>
    </location>
    <ligand>
        <name>D-glyceraldehyde 3-phosphate</name>
        <dbReference type="ChEBI" id="CHEBI:59776"/>
    </ligand>
</feature>
<feature type="binding site" evidence="1">
    <location>
        <position position="231"/>
    </location>
    <ligand>
        <name>D-glyceraldehyde 3-phosphate</name>
        <dbReference type="ChEBI" id="CHEBI:59776"/>
    </ligand>
</feature>
<feature type="binding site" evidence="1">
    <location>
        <position position="313"/>
    </location>
    <ligand>
        <name>NAD(+)</name>
        <dbReference type="ChEBI" id="CHEBI:57540"/>
    </ligand>
</feature>
<feature type="site" description="Activates thiol group during catalysis" evidence="1">
    <location>
        <position position="176"/>
    </location>
</feature>
<name>G3P_PHYIN</name>
<protein>
    <recommendedName>
        <fullName>Glyceraldehyde-3-phosphate dehydrogenase</fullName>
        <shortName>GAPDH</shortName>
        <ecNumber>1.2.1.12</ecNumber>
    </recommendedName>
</protein>
<sequence length="332" mass="36117">MNVAINGFGRIGRLVLRASAKNPLINIVAINDPFVSTTYMEYMLEYDTVHGKFDGSLSHDETHIFVNGKPIRVFNEMNPENIKWGEEQVQYVVESTGAFTTLEKASTHLKNGVEKVVISAPSSDAPMFVMGVNHELYEKNMHVVSNASCTTNCLAPLAKVVNDKFGIKEGLMTTVHAVTATQKTVDGPSKKDWRGGRGACFNIIPSSTGAAKAVGKVIPSLNGKLTGMSFRVPTADVSVVDLTARLVNPASYDEIKAAIKSASENEMKGILGYTEKAVVSSDFIGDSHSSIFDAEAGIALTDDFVKLVSWYDNEWGYSSRVLDLIEHMVKNE</sequence>
<comment type="catalytic activity">
    <reaction evidence="2">
        <text>D-glyceraldehyde 3-phosphate + phosphate + NAD(+) = (2R)-3-phospho-glyceroyl phosphate + NADH + H(+)</text>
        <dbReference type="Rhea" id="RHEA:10300"/>
        <dbReference type="ChEBI" id="CHEBI:15378"/>
        <dbReference type="ChEBI" id="CHEBI:43474"/>
        <dbReference type="ChEBI" id="CHEBI:57540"/>
        <dbReference type="ChEBI" id="CHEBI:57604"/>
        <dbReference type="ChEBI" id="CHEBI:57945"/>
        <dbReference type="ChEBI" id="CHEBI:59776"/>
        <dbReference type="EC" id="1.2.1.12"/>
    </reaction>
</comment>
<comment type="pathway">
    <text>Carbohydrate degradation; glycolysis; pyruvate from D-glyceraldehyde 3-phosphate: step 1/5.</text>
</comment>
<comment type="subunit">
    <text>Homotetramer.</text>
</comment>
<comment type="subcellular location">
    <subcellularLocation>
        <location>Cytoplasm</location>
    </subcellularLocation>
</comment>
<comment type="similarity">
    <text evidence="3">Belongs to the glyceraldehyde-3-phosphate dehydrogenase family.</text>
</comment>
<comment type="sequence caution" evidence="3">
    <conflict type="erroneous initiation">
        <sequence resource="EMBL-CDS" id="CAA45835"/>
    </conflict>
</comment>
<gene>
    <name type="primary">GPDA</name>
</gene>
<dbReference type="EC" id="1.2.1.12"/>
<dbReference type="EMBL" id="X64537">
    <property type="protein sequence ID" value="CAA45835.1"/>
    <property type="status" value="ALT_INIT"/>
    <property type="molecule type" value="Genomic_DNA"/>
</dbReference>
<dbReference type="PIR" id="S22487">
    <property type="entry name" value="DEJNGI"/>
</dbReference>
<dbReference type="SMR" id="P26988"/>
<dbReference type="VEuPathDB" id="FungiDB:PITG_16047"/>
<dbReference type="UniPathway" id="UPA00109">
    <property type="reaction ID" value="UER00184"/>
</dbReference>
<dbReference type="GO" id="GO:0005829">
    <property type="term" value="C:cytosol"/>
    <property type="evidence" value="ECO:0007669"/>
    <property type="project" value="TreeGrafter"/>
</dbReference>
<dbReference type="GO" id="GO:0004365">
    <property type="term" value="F:glyceraldehyde-3-phosphate dehydrogenase (NAD+) (phosphorylating) activity"/>
    <property type="evidence" value="ECO:0007669"/>
    <property type="project" value="UniProtKB-EC"/>
</dbReference>
<dbReference type="GO" id="GO:0051287">
    <property type="term" value="F:NAD binding"/>
    <property type="evidence" value="ECO:0007669"/>
    <property type="project" value="InterPro"/>
</dbReference>
<dbReference type="GO" id="GO:0050661">
    <property type="term" value="F:NADP binding"/>
    <property type="evidence" value="ECO:0007669"/>
    <property type="project" value="InterPro"/>
</dbReference>
<dbReference type="GO" id="GO:0006006">
    <property type="term" value="P:glucose metabolic process"/>
    <property type="evidence" value="ECO:0007669"/>
    <property type="project" value="InterPro"/>
</dbReference>
<dbReference type="GO" id="GO:0006096">
    <property type="term" value="P:glycolytic process"/>
    <property type="evidence" value="ECO:0007669"/>
    <property type="project" value="UniProtKB-UniPathway"/>
</dbReference>
<dbReference type="CDD" id="cd18126">
    <property type="entry name" value="GAPDH_I_C"/>
    <property type="match status" value="1"/>
</dbReference>
<dbReference type="CDD" id="cd05214">
    <property type="entry name" value="GAPDH_I_N"/>
    <property type="match status" value="1"/>
</dbReference>
<dbReference type="FunFam" id="3.30.360.10:FF:000001">
    <property type="entry name" value="Glyceraldehyde-3-phosphate dehydrogenase"/>
    <property type="match status" value="1"/>
</dbReference>
<dbReference type="FunFam" id="3.40.50.720:FF:000266">
    <property type="entry name" value="Glyceraldehyde-3-phosphate dehydrogenase"/>
    <property type="match status" value="1"/>
</dbReference>
<dbReference type="Gene3D" id="3.30.360.10">
    <property type="entry name" value="Dihydrodipicolinate Reductase, domain 2"/>
    <property type="match status" value="1"/>
</dbReference>
<dbReference type="Gene3D" id="3.40.50.720">
    <property type="entry name" value="NAD(P)-binding Rossmann-like Domain"/>
    <property type="match status" value="1"/>
</dbReference>
<dbReference type="InterPro" id="IPR020831">
    <property type="entry name" value="GlycerAld/Erythrose_P_DH"/>
</dbReference>
<dbReference type="InterPro" id="IPR020830">
    <property type="entry name" value="GlycerAld_3-P_DH_AS"/>
</dbReference>
<dbReference type="InterPro" id="IPR020829">
    <property type="entry name" value="GlycerAld_3-P_DH_cat"/>
</dbReference>
<dbReference type="InterPro" id="IPR020828">
    <property type="entry name" value="GlycerAld_3-P_DH_NAD(P)-bd"/>
</dbReference>
<dbReference type="InterPro" id="IPR006424">
    <property type="entry name" value="Glyceraldehyde-3-P_DH_1"/>
</dbReference>
<dbReference type="InterPro" id="IPR036291">
    <property type="entry name" value="NAD(P)-bd_dom_sf"/>
</dbReference>
<dbReference type="NCBIfam" id="TIGR01534">
    <property type="entry name" value="GAPDH-I"/>
    <property type="match status" value="1"/>
</dbReference>
<dbReference type="PANTHER" id="PTHR10836">
    <property type="entry name" value="GLYCERALDEHYDE 3-PHOSPHATE DEHYDROGENASE"/>
    <property type="match status" value="1"/>
</dbReference>
<dbReference type="PANTHER" id="PTHR10836:SF130">
    <property type="entry name" value="TRIOSEPHOSPHATE ISOMERASE_GLYCERALDEHYDE-3-PHOSPHATE DEHYDROGENASE"/>
    <property type="match status" value="1"/>
</dbReference>
<dbReference type="Pfam" id="PF02800">
    <property type="entry name" value="Gp_dh_C"/>
    <property type="match status" value="1"/>
</dbReference>
<dbReference type="Pfam" id="PF00044">
    <property type="entry name" value="Gp_dh_N"/>
    <property type="match status" value="1"/>
</dbReference>
<dbReference type="PIRSF" id="PIRSF000149">
    <property type="entry name" value="GAP_DH"/>
    <property type="match status" value="1"/>
</dbReference>
<dbReference type="PRINTS" id="PR00078">
    <property type="entry name" value="G3PDHDRGNASE"/>
</dbReference>
<dbReference type="SMART" id="SM00846">
    <property type="entry name" value="Gp_dh_N"/>
    <property type="match status" value="1"/>
</dbReference>
<dbReference type="SUPFAM" id="SSF55347">
    <property type="entry name" value="Glyceraldehyde-3-phosphate dehydrogenase-like, C-terminal domain"/>
    <property type="match status" value="1"/>
</dbReference>
<dbReference type="SUPFAM" id="SSF51735">
    <property type="entry name" value="NAD(P)-binding Rossmann-fold domains"/>
    <property type="match status" value="1"/>
</dbReference>
<dbReference type="PROSITE" id="PS00071">
    <property type="entry name" value="GAPDH"/>
    <property type="match status" value="1"/>
</dbReference>
<organism>
    <name type="scientific">Phytophthora infestans</name>
    <name type="common">Potato late blight agent</name>
    <name type="synonym">Botrytis infestans</name>
    <dbReference type="NCBI Taxonomy" id="4787"/>
    <lineage>
        <taxon>Eukaryota</taxon>
        <taxon>Sar</taxon>
        <taxon>Stramenopiles</taxon>
        <taxon>Oomycota</taxon>
        <taxon>Peronosporales</taxon>
        <taxon>Peronosporaceae</taxon>
        <taxon>Phytophthora</taxon>
    </lineage>
</organism>
<keyword id="KW-0963">Cytoplasm</keyword>
<keyword id="KW-0324">Glycolysis</keyword>
<keyword id="KW-0520">NAD</keyword>
<keyword id="KW-0560">Oxidoreductase</keyword>
<accession>P26988</accession>
<proteinExistence type="inferred from homology"/>
<reference key="1">
    <citation type="journal article" date="1992" name="Plant Mol. Biol.">
        <title>Sequence of the Phytophthora infestans glyceraldehyde-3-phosphate dehydrogenase-encoding gene (gpdA).</title>
        <authorList>
            <person name="Moon R.P."/>
            <person name="Unkles S.E."/>
            <person name="Duncan J.M."/>
            <person name="Hawkins A.R."/>
            <person name="Kinghorn J.R."/>
        </authorList>
    </citation>
    <scope>NUCLEOTIDE SEQUENCE [GENOMIC DNA]</scope>
</reference>